<name>RM23_NEUCR</name>
<proteinExistence type="evidence at protein level"/>
<protein>
    <recommendedName>
        <fullName evidence="3">Large ribosomal subunit protein uL13m</fullName>
    </recommendedName>
</protein>
<evidence type="ECO:0000269" key="1">
    <source>
    </source>
</evidence>
<evidence type="ECO:0000269" key="2">
    <source>
    </source>
</evidence>
<evidence type="ECO:0000303" key="3">
    <source>
    </source>
</evidence>
<evidence type="ECO:0000305" key="4"/>
<evidence type="ECO:0000305" key="5">
    <source>
    </source>
</evidence>
<evidence type="ECO:0007744" key="6">
    <source>
        <dbReference type="PDB" id="6YWS"/>
    </source>
</evidence>
<evidence type="ECO:0007744" key="7">
    <source>
        <dbReference type="PDB" id="6YWV"/>
    </source>
</evidence>
<organism>
    <name type="scientific">Neurospora crassa (strain ATCC 24698 / 74-OR23-1A / CBS 708.71 / DSM 1257 / FGSC 987)</name>
    <dbReference type="NCBI Taxonomy" id="367110"/>
    <lineage>
        <taxon>Eukaryota</taxon>
        <taxon>Fungi</taxon>
        <taxon>Dikarya</taxon>
        <taxon>Ascomycota</taxon>
        <taxon>Pezizomycotina</taxon>
        <taxon>Sordariomycetes</taxon>
        <taxon>Sordariomycetidae</taxon>
        <taxon>Sordariales</taxon>
        <taxon>Sordariaceae</taxon>
        <taxon>Neurospora</taxon>
    </lineage>
</organism>
<gene>
    <name type="primary">mrpl23</name>
    <name type="ORF">NCU07852</name>
</gene>
<feature type="chain" id="PRO_0000458611" description="Large ribosomal subunit protein uL13m">
    <location>
        <begin position="1"/>
        <end position="183"/>
    </location>
</feature>
<keyword id="KW-0002">3D-structure</keyword>
<keyword id="KW-0496">Mitochondrion</keyword>
<keyword id="KW-1185">Reference proteome</keyword>
<keyword id="KW-0687">Ribonucleoprotein</keyword>
<keyword id="KW-0689">Ribosomal protein</keyword>
<sequence>MSQTVGATRLAYSRVWHHISAVTPHPTLSTIKAPSEAITPPSLGRLASRIATILMGKHKPIWDPSTDCGDYVVVTNCAGLYTTGHKKWRKTYYRHNTRPGSLQAITMDALMEKHGGAEVLRKAVSGMLPKNRLRDKRLARLKAFEGDAHPYKENLVRFGGKVVGAPGWEEAVKAIREADMERL</sequence>
<accession>Q7SBV6</accession>
<reference key="1">
    <citation type="journal article" date="2003" name="Nature">
        <title>The genome sequence of the filamentous fungus Neurospora crassa.</title>
        <authorList>
            <person name="Galagan J.E."/>
            <person name="Calvo S.E."/>
            <person name="Borkovich K.A."/>
            <person name="Selker E.U."/>
            <person name="Read N.D."/>
            <person name="Jaffe D.B."/>
            <person name="FitzHugh W."/>
            <person name="Ma L.-J."/>
            <person name="Smirnov S."/>
            <person name="Purcell S."/>
            <person name="Rehman B."/>
            <person name="Elkins T."/>
            <person name="Engels R."/>
            <person name="Wang S."/>
            <person name="Nielsen C.B."/>
            <person name="Butler J."/>
            <person name="Endrizzi M."/>
            <person name="Qui D."/>
            <person name="Ianakiev P."/>
            <person name="Bell-Pedersen D."/>
            <person name="Nelson M.A."/>
            <person name="Werner-Washburne M."/>
            <person name="Selitrennikoff C.P."/>
            <person name="Kinsey J.A."/>
            <person name="Braun E.L."/>
            <person name="Zelter A."/>
            <person name="Schulte U."/>
            <person name="Kothe G.O."/>
            <person name="Jedd G."/>
            <person name="Mewes H.-W."/>
            <person name="Staben C."/>
            <person name="Marcotte E."/>
            <person name="Greenberg D."/>
            <person name="Roy A."/>
            <person name="Foley K."/>
            <person name="Naylor J."/>
            <person name="Stange-Thomann N."/>
            <person name="Barrett R."/>
            <person name="Gnerre S."/>
            <person name="Kamal M."/>
            <person name="Kamvysselis M."/>
            <person name="Mauceli E.W."/>
            <person name="Bielke C."/>
            <person name="Rudd S."/>
            <person name="Frishman D."/>
            <person name="Krystofova S."/>
            <person name="Rasmussen C."/>
            <person name="Metzenberg R.L."/>
            <person name="Perkins D.D."/>
            <person name="Kroken S."/>
            <person name="Cogoni C."/>
            <person name="Macino G."/>
            <person name="Catcheside D.E.A."/>
            <person name="Li W."/>
            <person name="Pratt R.J."/>
            <person name="Osmani S.A."/>
            <person name="DeSouza C.P.C."/>
            <person name="Glass N.L."/>
            <person name="Orbach M.J."/>
            <person name="Berglund J.A."/>
            <person name="Voelker R."/>
            <person name="Yarden O."/>
            <person name="Plamann M."/>
            <person name="Seiler S."/>
            <person name="Dunlap J.C."/>
            <person name="Radford A."/>
            <person name="Aramayo R."/>
            <person name="Natvig D.O."/>
            <person name="Alex L.A."/>
            <person name="Mannhaupt G."/>
            <person name="Ebbole D.J."/>
            <person name="Freitag M."/>
            <person name="Paulsen I."/>
            <person name="Sachs M.S."/>
            <person name="Lander E.S."/>
            <person name="Nusbaum C."/>
            <person name="Birren B.W."/>
        </authorList>
    </citation>
    <scope>NUCLEOTIDE SEQUENCE [LARGE SCALE GENOMIC DNA]</scope>
    <source>
        <strain>ATCC 24698 / 74-OR23-1A / CBS 708.71 / DSM 1257 / FGSC 987</strain>
    </source>
</reference>
<reference key="2">
    <citation type="journal article" date="2006" name="FEMS Microbiol. Lett.">
        <title>Identification and comparative analysis of the large subunit mitochondrial ribosomal proteins of Neurospora crassa.</title>
        <authorList>
            <person name="Gan X."/>
            <person name="Arita K."/>
            <person name="Isono S."/>
            <person name="Kitakawa M."/>
            <person name="Yoshino K."/>
            <person name="Yonezawa K."/>
            <person name="Kato A."/>
            <person name="Inoue H."/>
            <person name="Isono K."/>
        </authorList>
    </citation>
    <scope>IDENTIFICATION IN THE MITOCHONDRIAL RIBOSOMAL LARGE COMPLEX</scope>
    <scope>IDENTIFICATION BY MASS SPECTROMETRY</scope>
</reference>
<reference evidence="6 7" key="3">
    <citation type="journal article" date="2020" name="Nat. Commun.">
        <title>Analysis of translating mitoribosome reveals functional characteristics of translation in mitochondria of fungi.</title>
        <authorList>
            <person name="Itoh Y."/>
            <person name="Naschberger A."/>
            <person name="Mortezaei N."/>
            <person name="Herrmann J.M."/>
            <person name="Amunts A."/>
        </authorList>
    </citation>
    <scope>STRUCTURE BY ELECTRON MICROSCOPY (2.74 ANGSTROMS)</scope>
</reference>
<comment type="function">
    <text evidence="5">Component of the mitochondrial ribosome (mitoribosome), a dedicated translation machinery responsible for the synthesis of mitochondrial genome-encoded proteins, including at least some of the essential transmembrane subunits of the mitochondrial respiratory chain. The mitoribosomes are attached to the mitochondrial inner membrane and translation products are cotranslationally integrated into the membrane.</text>
</comment>
<comment type="subunit">
    <text evidence="1 2">Component of the mitochondrial large ribosomal subunit (mt-LSU). Mature N.crassa 74S mitochondrial ribosomes consist of a small (37S) and a large (54S) subunit. The 37S small subunit contains a 16S ribosomal RNA (16S mt-rRNA) and 32 different proteins. The 54S large subunit contains a 23S rRNA (23S mt-rRNA) and 42 different proteins.</text>
</comment>
<comment type="subcellular location">
    <subcellularLocation>
        <location evidence="1 2">Mitochondrion</location>
    </subcellularLocation>
</comment>
<comment type="similarity">
    <text evidence="4">Belongs to the universal ribosomal protein uL13 family.</text>
</comment>
<dbReference type="EMBL" id="CM002238">
    <property type="protein sequence ID" value="EAA33877.1"/>
    <property type="molecule type" value="Genomic_DNA"/>
</dbReference>
<dbReference type="RefSeq" id="XP_963113.1">
    <property type="nucleotide sequence ID" value="XM_958020.2"/>
</dbReference>
<dbReference type="PDB" id="6YWS">
    <property type="method" value="EM"/>
    <property type="resolution" value="2.74 A"/>
    <property type="chains" value="H=1-183"/>
</dbReference>
<dbReference type="PDB" id="6YWV">
    <property type="method" value="EM"/>
    <property type="resolution" value="3.03 A"/>
    <property type="chains" value="H=1-183"/>
</dbReference>
<dbReference type="PDB" id="6YWX">
    <property type="method" value="EM"/>
    <property type="resolution" value="3.10 A"/>
    <property type="chains" value="H=1-183"/>
</dbReference>
<dbReference type="PDBsum" id="6YWS"/>
<dbReference type="PDBsum" id="6YWV"/>
<dbReference type="PDBsum" id="6YWX"/>
<dbReference type="EMDB" id="EMD-10973"/>
<dbReference type="EMDB" id="EMD-10977"/>
<dbReference type="EMDB" id="EMD-10978"/>
<dbReference type="SMR" id="Q7SBV6"/>
<dbReference type="FunCoup" id="Q7SBV6">
    <property type="interactions" value="696"/>
</dbReference>
<dbReference type="STRING" id="367110.Q7SBV6"/>
<dbReference type="PaxDb" id="5141-EFNCRP00000007463"/>
<dbReference type="EnsemblFungi" id="EAA33877">
    <property type="protein sequence ID" value="EAA33877"/>
    <property type="gene ID" value="NCU07852"/>
</dbReference>
<dbReference type="GeneID" id="3879252"/>
<dbReference type="KEGG" id="ncr:NCU07852"/>
<dbReference type="VEuPathDB" id="FungiDB:NCU07852"/>
<dbReference type="HOGENOM" id="CLU_082184_1_1_1"/>
<dbReference type="InParanoid" id="Q7SBV6"/>
<dbReference type="OMA" id="HKPIYTP"/>
<dbReference type="OrthoDB" id="274622at2759"/>
<dbReference type="Proteomes" id="UP000001805">
    <property type="component" value="Chromosome 3, Linkage Group III"/>
</dbReference>
<dbReference type="GO" id="GO:0005762">
    <property type="term" value="C:mitochondrial large ribosomal subunit"/>
    <property type="evidence" value="ECO:0000318"/>
    <property type="project" value="GO_Central"/>
</dbReference>
<dbReference type="GO" id="GO:0005840">
    <property type="term" value="C:ribosome"/>
    <property type="evidence" value="ECO:0000318"/>
    <property type="project" value="GO_Central"/>
</dbReference>
<dbReference type="GO" id="GO:0003729">
    <property type="term" value="F:mRNA binding"/>
    <property type="evidence" value="ECO:0000318"/>
    <property type="project" value="GO_Central"/>
</dbReference>
<dbReference type="GO" id="GO:0003735">
    <property type="term" value="F:structural constituent of ribosome"/>
    <property type="evidence" value="ECO:0000318"/>
    <property type="project" value="GO_Central"/>
</dbReference>
<dbReference type="GO" id="GO:0017148">
    <property type="term" value="P:negative regulation of translation"/>
    <property type="evidence" value="ECO:0000318"/>
    <property type="project" value="GO_Central"/>
</dbReference>
<dbReference type="GO" id="GO:0006412">
    <property type="term" value="P:translation"/>
    <property type="evidence" value="ECO:0007669"/>
    <property type="project" value="InterPro"/>
</dbReference>
<dbReference type="CDD" id="cd00392">
    <property type="entry name" value="Ribosomal_L13"/>
    <property type="match status" value="1"/>
</dbReference>
<dbReference type="FunFam" id="3.90.1180.10:FF:000007">
    <property type="entry name" value="50S ribosomal protein L13"/>
    <property type="match status" value="1"/>
</dbReference>
<dbReference type="Gene3D" id="3.90.1180.10">
    <property type="entry name" value="Ribosomal protein L13"/>
    <property type="match status" value="1"/>
</dbReference>
<dbReference type="HAMAP" id="MF_01366">
    <property type="entry name" value="Ribosomal_uL13"/>
    <property type="match status" value="1"/>
</dbReference>
<dbReference type="InterPro" id="IPR005822">
    <property type="entry name" value="Ribosomal_uL13"/>
</dbReference>
<dbReference type="InterPro" id="IPR005823">
    <property type="entry name" value="Ribosomal_uL13_bac-type"/>
</dbReference>
<dbReference type="InterPro" id="IPR036899">
    <property type="entry name" value="Ribosomal_uL13_sf"/>
</dbReference>
<dbReference type="NCBIfam" id="TIGR01066">
    <property type="entry name" value="rplM_bact"/>
    <property type="match status" value="1"/>
</dbReference>
<dbReference type="PANTHER" id="PTHR11545:SF2">
    <property type="entry name" value="LARGE RIBOSOMAL SUBUNIT PROTEIN UL13M"/>
    <property type="match status" value="1"/>
</dbReference>
<dbReference type="PANTHER" id="PTHR11545">
    <property type="entry name" value="RIBOSOMAL PROTEIN L13"/>
    <property type="match status" value="1"/>
</dbReference>
<dbReference type="Pfam" id="PF00572">
    <property type="entry name" value="Ribosomal_L13"/>
    <property type="match status" value="1"/>
</dbReference>
<dbReference type="PIRSF" id="PIRSF002181">
    <property type="entry name" value="Ribosomal_L13"/>
    <property type="match status" value="1"/>
</dbReference>
<dbReference type="SUPFAM" id="SSF52161">
    <property type="entry name" value="Ribosomal protein L13"/>
    <property type="match status" value="1"/>
</dbReference>